<evidence type="ECO:0000255" key="1">
    <source>
        <dbReference type="HAMAP-Rule" id="MF_01701"/>
    </source>
</evidence>
<dbReference type="EC" id="7.3.2.3" evidence="1"/>
<dbReference type="EMBL" id="AF137379">
    <property type="protein sequence ID" value="AAD54843.1"/>
    <property type="molecule type" value="Genomic_DNA"/>
</dbReference>
<dbReference type="RefSeq" id="NP_050872.1">
    <property type="nucleotide sequence ID" value="NC_000927.1"/>
</dbReference>
<dbReference type="SMR" id="Q9TKX3"/>
<dbReference type="GeneID" id="802036"/>
<dbReference type="GO" id="GO:0043190">
    <property type="term" value="C:ATP-binding cassette (ABC) transporter complex"/>
    <property type="evidence" value="ECO:0007669"/>
    <property type="project" value="InterPro"/>
</dbReference>
<dbReference type="GO" id="GO:0009507">
    <property type="term" value="C:chloroplast"/>
    <property type="evidence" value="ECO:0007669"/>
    <property type="project" value="UniProtKB-SubCell"/>
</dbReference>
<dbReference type="GO" id="GO:0015419">
    <property type="term" value="F:ABC-type sulfate transporter activity"/>
    <property type="evidence" value="ECO:0007669"/>
    <property type="project" value="InterPro"/>
</dbReference>
<dbReference type="GO" id="GO:0102025">
    <property type="term" value="F:ABC-type thiosulfate transporter activity"/>
    <property type="evidence" value="ECO:0007669"/>
    <property type="project" value="RHEA"/>
</dbReference>
<dbReference type="GO" id="GO:0005524">
    <property type="term" value="F:ATP binding"/>
    <property type="evidence" value="ECO:0007669"/>
    <property type="project" value="UniProtKB-KW"/>
</dbReference>
<dbReference type="GO" id="GO:0016887">
    <property type="term" value="F:ATP hydrolysis activity"/>
    <property type="evidence" value="ECO:0007669"/>
    <property type="project" value="InterPro"/>
</dbReference>
<dbReference type="CDD" id="cd03296">
    <property type="entry name" value="ABC_CysA_sulfate_importer"/>
    <property type="match status" value="1"/>
</dbReference>
<dbReference type="FunFam" id="3.40.50.300:FF:000425">
    <property type="entry name" value="Probable ABC transporter, ATP-binding subunit"/>
    <property type="match status" value="1"/>
</dbReference>
<dbReference type="Gene3D" id="3.40.50.300">
    <property type="entry name" value="P-loop containing nucleotide triphosphate hydrolases"/>
    <property type="match status" value="1"/>
</dbReference>
<dbReference type="InterPro" id="IPR003593">
    <property type="entry name" value="AAA+_ATPase"/>
</dbReference>
<dbReference type="InterPro" id="IPR050093">
    <property type="entry name" value="ABC_SmlMolc_Importer"/>
</dbReference>
<dbReference type="InterPro" id="IPR003439">
    <property type="entry name" value="ABC_transporter-like_ATP-bd"/>
</dbReference>
<dbReference type="InterPro" id="IPR017871">
    <property type="entry name" value="ABC_transporter-like_CS"/>
</dbReference>
<dbReference type="InterPro" id="IPR027417">
    <property type="entry name" value="P-loop_NTPase"/>
</dbReference>
<dbReference type="InterPro" id="IPR005666">
    <property type="entry name" value="Sulph_transpt1"/>
</dbReference>
<dbReference type="NCBIfam" id="TIGR00968">
    <property type="entry name" value="3a0106s01"/>
    <property type="match status" value="1"/>
</dbReference>
<dbReference type="PANTHER" id="PTHR42781">
    <property type="entry name" value="SPERMIDINE/PUTRESCINE IMPORT ATP-BINDING PROTEIN POTA"/>
    <property type="match status" value="1"/>
</dbReference>
<dbReference type="PANTHER" id="PTHR42781:SF4">
    <property type="entry name" value="SPERMIDINE_PUTRESCINE IMPORT ATP-BINDING PROTEIN POTA"/>
    <property type="match status" value="1"/>
</dbReference>
<dbReference type="Pfam" id="PF00005">
    <property type="entry name" value="ABC_tran"/>
    <property type="match status" value="1"/>
</dbReference>
<dbReference type="SMART" id="SM00382">
    <property type="entry name" value="AAA"/>
    <property type="match status" value="1"/>
</dbReference>
<dbReference type="SUPFAM" id="SSF52540">
    <property type="entry name" value="P-loop containing nucleoside triphosphate hydrolases"/>
    <property type="match status" value="1"/>
</dbReference>
<dbReference type="PROSITE" id="PS00211">
    <property type="entry name" value="ABC_TRANSPORTER_1"/>
    <property type="match status" value="1"/>
</dbReference>
<dbReference type="PROSITE" id="PS50893">
    <property type="entry name" value="ABC_TRANSPORTER_2"/>
    <property type="match status" value="1"/>
</dbReference>
<dbReference type="PROSITE" id="PS51237">
    <property type="entry name" value="CYSA"/>
    <property type="match status" value="1"/>
</dbReference>
<feature type="chain" id="PRO_0000092310" description="Sulfate/thiosulfate import ATP-binding protein CysA">
    <location>
        <begin position="1"/>
        <end position="343"/>
    </location>
</feature>
<feature type="domain" description="ABC transporter" evidence="1">
    <location>
        <begin position="3"/>
        <end position="233"/>
    </location>
</feature>
<feature type="binding site" evidence="1">
    <location>
        <begin position="35"/>
        <end position="42"/>
    </location>
    <ligand>
        <name>ATP</name>
        <dbReference type="ChEBI" id="CHEBI:30616"/>
    </ligand>
</feature>
<reference key="1">
    <citation type="journal article" date="1999" name="Proc. Natl. Acad. Sci. U.S.A.">
        <title>The complete chloroplast DNA sequence of the green alga Nephroselmis olivacea: insights into the architecture of ancestral chloroplast genomes.</title>
        <authorList>
            <person name="Turmel M."/>
            <person name="Otis C."/>
            <person name="Lemieux C."/>
        </authorList>
    </citation>
    <scope>NUCLEOTIDE SEQUENCE [LARGE SCALE GENOMIC DNA]</scope>
    <source>
        <strain>NIES-484 / S-N-5-8</strain>
    </source>
</reference>
<accession>Q9TKX3</accession>
<keyword id="KW-0067">ATP-binding</keyword>
<keyword id="KW-0150">Chloroplast</keyword>
<keyword id="KW-0547">Nucleotide-binding</keyword>
<keyword id="KW-0934">Plastid</keyword>
<keyword id="KW-0764">Sulfate transport</keyword>
<keyword id="KW-1278">Translocase</keyword>
<keyword id="KW-0813">Transport</keyword>
<gene>
    <name evidence="1" type="primary">cysA</name>
</gene>
<organism>
    <name type="scientific">Nephroselmis olivacea</name>
    <name type="common">Green alga</name>
    <dbReference type="NCBI Taxonomy" id="31312"/>
    <lineage>
        <taxon>Eukaryota</taxon>
        <taxon>Viridiplantae</taxon>
        <taxon>Chlorophyta</taxon>
        <taxon>Nephroselmidophyceae</taxon>
        <taxon>Nephroselmidales</taxon>
        <taxon>Nephroselmidaceae</taxon>
        <taxon>Nephroselmis</taxon>
    </lineage>
</organism>
<name>CYSA_NEPOL</name>
<comment type="function">
    <text evidence="1">Part of the ABC transporter complex involved in sulfate/thiosulfate import. Responsible for energy coupling to the transport system.</text>
</comment>
<comment type="catalytic activity">
    <reaction evidence="1">
        <text>sulfate(out) + ATP + H2O = sulfate(in) + ADP + phosphate + H(+)</text>
        <dbReference type="Rhea" id="RHEA:10192"/>
        <dbReference type="ChEBI" id="CHEBI:15377"/>
        <dbReference type="ChEBI" id="CHEBI:15378"/>
        <dbReference type="ChEBI" id="CHEBI:16189"/>
        <dbReference type="ChEBI" id="CHEBI:30616"/>
        <dbReference type="ChEBI" id="CHEBI:43474"/>
        <dbReference type="ChEBI" id="CHEBI:456216"/>
        <dbReference type="EC" id="7.3.2.3"/>
    </reaction>
</comment>
<comment type="catalytic activity">
    <reaction evidence="1">
        <text>thiosulfate(out) + ATP + H2O = thiosulfate(in) + ADP + phosphate + H(+)</text>
        <dbReference type="Rhea" id="RHEA:29871"/>
        <dbReference type="ChEBI" id="CHEBI:15377"/>
        <dbReference type="ChEBI" id="CHEBI:15378"/>
        <dbReference type="ChEBI" id="CHEBI:30616"/>
        <dbReference type="ChEBI" id="CHEBI:33542"/>
        <dbReference type="ChEBI" id="CHEBI:43474"/>
        <dbReference type="ChEBI" id="CHEBI:456216"/>
        <dbReference type="EC" id="7.3.2.3"/>
    </reaction>
</comment>
<comment type="subcellular location">
    <subcellularLocation>
        <location>Plastid</location>
        <location>Chloroplast</location>
    </subcellularLocation>
</comment>
<comment type="similarity">
    <text evidence="1">Belongs to the ABC transporter superfamily. Sulfate/tungstate importer (TC 3.A.1.6) family.</text>
</comment>
<protein>
    <recommendedName>
        <fullName evidence="1">Sulfate/thiosulfate import ATP-binding protein CysA</fullName>
        <ecNumber evidence="1">7.3.2.3</ecNumber>
    </recommendedName>
    <alternativeName>
        <fullName evidence="1">Sulfate-transporting ATPase</fullName>
    </alternativeName>
</protein>
<geneLocation type="chloroplast"/>
<sequence>MSILIENISKTFGTFRALDHVNLEVKAGSLVALVGPSGSGKSTLLRMIAGLERADEGKIWLAGRDATYAPIQKRHIGFVFQNYALFKHLNVAKNISFGLEVRQANPNQIRSRVRDLLQLIQLEHMADRYPAQLSGGQRQRVALARALAVEPKVLLLDEPFGALDARVRRELRSWLRDLHQEMPVTTVFVTHDQQEAMEVAHEIVVFNQGRLEQVGSPQEIYDHPATPFVMGFMGHINHGVDDVQQSSYFVRPNDVIIQLVPSTNSLSGKVVGMTYGDTSMKLDVDIPQQVPSSDWAPRGSLWRIHLSRRDFNQFNSMLVGGIQIGSVLYVQPRRTEMVRGYSI</sequence>
<proteinExistence type="inferred from homology"/>